<geneLocation type="chloroplast"/>
<organism>
    <name type="scientific">Pyropia yezoensis</name>
    <name type="common">Susabi-nori</name>
    <name type="synonym">Porphyra yezoensis</name>
    <dbReference type="NCBI Taxonomy" id="2788"/>
    <lineage>
        <taxon>Eukaryota</taxon>
        <taxon>Rhodophyta</taxon>
        <taxon>Bangiophyceae</taxon>
        <taxon>Bangiales</taxon>
        <taxon>Bangiaceae</taxon>
        <taxon>Pyropia</taxon>
    </lineage>
</organism>
<feature type="chain" id="PRO_0000276012" description="Photosystem I reaction center subunit IV">
    <location>
        <begin position="1"/>
        <end position="62"/>
    </location>
</feature>
<keyword id="KW-0150">Chloroplast</keyword>
<keyword id="KW-0472">Membrane</keyword>
<keyword id="KW-0602">Photosynthesis</keyword>
<keyword id="KW-0603">Photosystem I</keyword>
<keyword id="KW-0934">Plastid</keyword>
<keyword id="KW-0793">Thylakoid</keyword>
<accession>Q1XDG0</accession>
<proteinExistence type="inferred from homology"/>
<reference key="1">
    <citation type="submission" date="2003-11" db="EMBL/GenBank/DDBJ databases">
        <title>Whole genome sequence of Porphyra yezoensis chloroplast.</title>
        <authorList>
            <person name="Kunimoto M."/>
            <person name="Morishima K."/>
            <person name="Yoshikawa M."/>
            <person name="Fukuda S."/>
            <person name="Kobayashi T."/>
            <person name="Kobayashi M."/>
            <person name="Okazaki T."/>
            <person name="Ohara I."/>
            <person name="Nakayama I."/>
        </authorList>
    </citation>
    <scope>NUCLEOTIDE SEQUENCE [LARGE SCALE GENOMIC DNA]</scope>
    <source>
        <strain>U-51</strain>
    </source>
</reference>
<dbReference type="EMBL" id="AP006715">
    <property type="protein sequence ID" value="BAE92451.1"/>
    <property type="molecule type" value="Genomic_DNA"/>
</dbReference>
<dbReference type="RefSeq" id="YP_537008.1">
    <property type="nucleotide sequence ID" value="NC_007932.1"/>
</dbReference>
<dbReference type="SMR" id="Q1XDG0"/>
<dbReference type="GeneID" id="3978950"/>
<dbReference type="GO" id="GO:0009535">
    <property type="term" value="C:chloroplast thylakoid membrane"/>
    <property type="evidence" value="ECO:0007669"/>
    <property type="project" value="UniProtKB-SubCell"/>
</dbReference>
<dbReference type="GO" id="GO:0009538">
    <property type="term" value="C:photosystem I reaction center"/>
    <property type="evidence" value="ECO:0007669"/>
    <property type="project" value="InterPro"/>
</dbReference>
<dbReference type="GO" id="GO:0015979">
    <property type="term" value="P:photosynthesis"/>
    <property type="evidence" value="ECO:0007669"/>
    <property type="project" value="UniProtKB-UniRule"/>
</dbReference>
<dbReference type="Gene3D" id="2.30.30.50">
    <property type="match status" value="1"/>
</dbReference>
<dbReference type="HAMAP" id="MF_00613">
    <property type="entry name" value="PSI_PsaE"/>
    <property type="match status" value="1"/>
</dbReference>
<dbReference type="InterPro" id="IPR008990">
    <property type="entry name" value="Elect_transpt_acc-like_dom_sf"/>
</dbReference>
<dbReference type="InterPro" id="IPR003375">
    <property type="entry name" value="PSI_PsaE"/>
</dbReference>
<dbReference type="NCBIfam" id="NF002745">
    <property type="entry name" value="PRK02749.1"/>
    <property type="match status" value="1"/>
</dbReference>
<dbReference type="PANTHER" id="PTHR34549">
    <property type="entry name" value="PHOTOSYSTEM I REACTION CENTER SUBUNIT IV A, CHLOROPLASTIC-RELATED"/>
    <property type="match status" value="1"/>
</dbReference>
<dbReference type="PANTHER" id="PTHR34549:SF2">
    <property type="entry name" value="PHOTOSYSTEM I SUBUNIT IV"/>
    <property type="match status" value="1"/>
</dbReference>
<dbReference type="Pfam" id="PF02427">
    <property type="entry name" value="PSI_PsaE"/>
    <property type="match status" value="1"/>
</dbReference>
<dbReference type="SUPFAM" id="SSF50090">
    <property type="entry name" value="Electron transport accessory proteins"/>
    <property type="match status" value="1"/>
</dbReference>
<protein>
    <recommendedName>
        <fullName evidence="1">Photosystem I reaction center subunit IV</fullName>
        <shortName evidence="1">PSI-E</shortName>
    </recommendedName>
</protein>
<gene>
    <name evidence="1" type="primary">psaE</name>
</gene>
<sequence length="62" mass="7140">MERGSKVKILRKESYWYQEIGTVAAIDKSGIKYPVLVRFEKVNYNNVNTNSFADTELINLGK</sequence>
<evidence type="ECO:0000255" key="1">
    <source>
        <dbReference type="HAMAP-Rule" id="MF_00613"/>
    </source>
</evidence>
<comment type="function">
    <text evidence="1">Stabilizes the interaction between PsaC and the PSI core, assists the docking of the ferredoxin to PSI and interacts with ferredoxin-NADP oxidoreductase.</text>
</comment>
<comment type="subcellular location">
    <subcellularLocation>
        <location evidence="1">Plastid</location>
        <location evidence="1">Chloroplast thylakoid membrane</location>
        <topology evidence="1">Peripheral membrane protein</topology>
    </subcellularLocation>
</comment>
<comment type="similarity">
    <text evidence="1">Belongs to the PsaE family.</text>
</comment>
<name>PSAE_PYRYE</name>